<organism>
    <name type="scientific">Rhodopseudomonas palustris (strain BisA53)</name>
    <dbReference type="NCBI Taxonomy" id="316055"/>
    <lineage>
        <taxon>Bacteria</taxon>
        <taxon>Pseudomonadati</taxon>
        <taxon>Pseudomonadota</taxon>
        <taxon>Alphaproteobacteria</taxon>
        <taxon>Hyphomicrobiales</taxon>
        <taxon>Nitrobacteraceae</taxon>
        <taxon>Rhodopseudomonas</taxon>
    </lineage>
</organism>
<accession>Q07P51</accession>
<dbReference type="EMBL" id="CP000463">
    <property type="protein sequence ID" value="ABJ06283.1"/>
    <property type="molecule type" value="Genomic_DNA"/>
</dbReference>
<dbReference type="STRING" id="316055.RPE_2343"/>
<dbReference type="KEGG" id="rpe:RPE_2343"/>
<dbReference type="eggNOG" id="COG0759">
    <property type="taxonomic scope" value="Bacteria"/>
</dbReference>
<dbReference type="HOGENOM" id="CLU_144811_0_0_5"/>
<dbReference type="OrthoDB" id="9801753at2"/>
<dbReference type="GO" id="GO:0005886">
    <property type="term" value="C:plasma membrane"/>
    <property type="evidence" value="ECO:0007669"/>
    <property type="project" value="UniProtKB-SubCell"/>
</dbReference>
<dbReference type="HAMAP" id="MF_00386">
    <property type="entry name" value="UPF0161_YidD"/>
    <property type="match status" value="1"/>
</dbReference>
<dbReference type="InterPro" id="IPR002696">
    <property type="entry name" value="Membr_insert_effic_factor_YidD"/>
</dbReference>
<dbReference type="NCBIfam" id="TIGR00278">
    <property type="entry name" value="membrane protein insertion efficiency factor YidD"/>
    <property type="match status" value="1"/>
</dbReference>
<dbReference type="PANTHER" id="PTHR33383">
    <property type="entry name" value="MEMBRANE PROTEIN INSERTION EFFICIENCY FACTOR-RELATED"/>
    <property type="match status" value="1"/>
</dbReference>
<dbReference type="PANTHER" id="PTHR33383:SF1">
    <property type="entry name" value="MEMBRANE PROTEIN INSERTION EFFICIENCY FACTOR-RELATED"/>
    <property type="match status" value="1"/>
</dbReference>
<dbReference type="Pfam" id="PF01809">
    <property type="entry name" value="YidD"/>
    <property type="match status" value="1"/>
</dbReference>
<dbReference type="SMART" id="SM01234">
    <property type="entry name" value="Haemolytic"/>
    <property type="match status" value="1"/>
</dbReference>
<name>YIDD_RHOP5</name>
<proteinExistence type="inferred from homology"/>
<evidence type="ECO:0000255" key="1">
    <source>
        <dbReference type="HAMAP-Rule" id="MF_00386"/>
    </source>
</evidence>
<sequence length="109" mass="12308">MKQSNLCPDCARAALRLPRQAGRGAIWLYRHTLSPLVGYHCRHLPTCSVYGDEAIGRFGLWAGGWMTLARLLRCQPWGTSGIDNVPAEPPGGARWYLPWRYGRWRGVND</sequence>
<keyword id="KW-0997">Cell inner membrane</keyword>
<keyword id="KW-1003">Cell membrane</keyword>
<keyword id="KW-0472">Membrane</keyword>
<feature type="chain" id="PRO_1000013116" description="Putative membrane protein insertion efficiency factor">
    <location>
        <begin position="1"/>
        <end position="109"/>
    </location>
</feature>
<gene>
    <name type="ordered locus">RPE_2343</name>
</gene>
<reference key="1">
    <citation type="submission" date="2006-09" db="EMBL/GenBank/DDBJ databases">
        <title>Complete sequence of Rhodopseudomonas palustris BisA53.</title>
        <authorList>
            <consortium name="US DOE Joint Genome Institute"/>
            <person name="Copeland A."/>
            <person name="Lucas S."/>
            <person name="Lapidus A."/>
            <person name="Barry K."/>
            <person name="Detter J.C."/>
            <person name="Glavina del Rio T."/>
            <person name="Hammon N."/>
            <person name="Israni S."/>
            <person name="Dalin E."/>
            <person name="Tice H."/>
            <person name="Pitluck S."/>
            <person name="Chain P."/>
            <person name="Malfatti S."/>
            <person name="Shin M."/>
            <person name="Vergez L."/>
            <person name="Schmutz J."/>
            <person name="Larimer F."/>
            <person name="Land M."/>
            <person name="Hauser L."/>
            <person name="Pelletier D.A."/>
            <person name="Kyrpides N."/>
            <person name="Kim E."/>
            <person name="Harwood C.S."/>
            <person name="Oda Y."/>
            <person name="Richardson P."/>
        </authorList>
    </citation>
    <scope>NUCLEOTIDE SEQUENCE [LARGE SCALE GENOMIC DNA]</scope>
    <source>
        <strain>BisA53</strain>
    </source>
</reference>
<protein>
    <recommendedName>
        <fullName evidence="1">Putative membrane protein insertion efficiency factor</fullName>
    </recommendedName>
</protein>
<comment type="function">
    <text evidence="1">Could be involved in insertion of integral membrane proteins into the membrane.</text>
</comment>
<comment type="subcellular location">
    <subcellularLocation>
        <location evidence="1">Cell inner membrane</location>
        <topology evidence="1">Peripheral membrane protein</topology>
        <orientation evidence="1">Cytoplasmic side</orientation>
    </subcellularLocation>
</comment>
<comment type="similarity">
    <text evidence="1">Belongs to the UPF0161 family.</text>
</comment>